<keyword id="KW-0342">GTP-binding</keyword>
<keyword id="KW-0547">Nucleotide-binding</keyword>
<keyword id="KW-0548">Nucleotidyltransferase</keyword>
<keyword id="KW-1185">Reference proteome</keyword>
<keyword id="KW-0808">Transferase</keyword>
<reference key="1">
    <citation type="submission" date="2004-06" db="EMBL/GenBank/DDBJ databases">
        <authorList>
            <consortium name="NIH - Xenopus Gene Collection (XGC) project"/>
        </authorList>
    </citation>
    <scope>NUCLEOTIDE SEQUENCE [LARGE SCALE MRNA]</scope>
    <source>
        <tissue>Kidney</tissue>
    </source>
</reference>
<protein>
    <recommendedName>
        <fullName>Mannose-1-phosphate guanyltransferase alpha-A</fullName>
        <ecNumber>2.7.7.13</ecNumber>
    </recommendedName>
    <alternativeName>
        <fullName>GDP-mannose pyrophosphorylase A-A</fullName>
    </alternativeName>
    <alternativeName>
        <fullName>GTP-mannose-1-phosphate guanylyltransferase subunit alpha-A</fullName>
    </alternativeName>
</protein>
<proteinExistence type="evidence at transcript level"/>
<organism>
    <name type="scientific">Xenopus laevis</name>
    <name type="common">African clawed frog</name>
    <dbReference type="NCBI Taxonomy" id="8355"/>
    <lineage>
        <taxon>Eukaryota</taxon>
        <taxon>Metazoa</taxon>
        <taxon>Chordata</taxon>
        <taxon>Craniata</taxon>
        <taxon>Vertebrata</taxon>
        <taxon>Euteleostomi</taxon>
        <taxon>Amphibia</taxon>
        <taxon>Batrachia</taxon>
        <taxon>Anura</taxon>
        <taxon>Pipoidea</taxon>
        <taxon>Pipidae</taxon>
        <taxon>Xenopodinae</taxon>
        <taxon>Xenopus</taxon>
        <taxon>Xenopus</taxon>
    </lineage>
</organism>
<accession>Q6DKE9</accession>
<evidence type="ECO:0000305" key="1"/>
<feature type="chain" id="PRO_0000327878" description="Mannose-1-phosphate guanyltransferase alpha-A">
    <location>
        <begin position="1"/>
        <end position="421"/>
    </location>
</feature>
<gene>
    <name type="primary">gmppa-a</name>
</gene>
<sequence>MLKAVILIGGPQKGTRFRPLSFEVPKPLFPVAGVPMVQHHIEACSKVPNLKEILLIGFYQPNEALNSFLLKAQQEFKVAIRYLQEYSALGTGGGIYHFRDQILSGGPQAFFVMNADVCSEFPLVSMLDFHKQHGGSQSYVILGTTANRTQSLNYGCIVANRDTQEVLHYVEKPGTFVSDIINCGIYLFSPSIFQHIAEVFQQNQQELQLEENSSWQRMEVIRLEQDVFSTLAGRGKLYVYKTEGCWSQIKSAGSAIYASRLYLSQYGTTHPERLASTKEGGPTIRGNVYIHPTANVDPSAVLGPNVSIGMGVTVAAGVRIRESIILHGAVLQDHSCVLNTIVGWDSMVGRWARVEGTPSDPNPNDPYSKIDSETLFRDGKLTPSITILGCNVSIPAEVVILNSIVLPHKELSRSFKNQIIL</sequence>
<name>GMPAA_XENLA</name>
<comment type="catalytic activity">
    <reaction>
        <text>alpha-D-mannose 1-phosphate + GTP + H(+) = GDP-alpha-D-mannose + diphosphate</text>
        <dbReference type="Rhea" id="RHEA:15229"/>
        <dbReference type="ChEBI" id="CHEBI:15378"/>
        <dbReference type="ChEBI" id="CHEBI:33019"/>
        <dbReference type="ChEBI" id="CHEBI:37565"/>
        <dbReference type="ChEBI" id="CHEBI:57527"/>
        <dbReference type="ChEBI" id="CHEBI:58409"/>
        <dbReference type="EC" id="2.7.7.13"/>
    </reaction>
</comment>
<comment type="pathway">
    <text>Nucleotide-sugar biosynthesis; GDP-alpha-D-mannose biosynthesis; GDP-alpha-D-mannose from alpha-D-mannose 1-phosphate (GTP route): step 1/1.</text>
</comment>
<comment type="similarity">
    <text evidence="1">Belongs to the transferase hexapeptide repeat family.</text>
</comment>
<dbReference type="EC" id="2.7.7.13"/>
<dbReference type="EMBL" id="BC074119">
    <property type="protein sequence ID" value="AAH74119.1"/>
    <property type="molecule type" value="mRNA"/>
</dbReference>
<dbReference type="RefSeq" id="NP_001086043.1">
    <property type="nucleotide sequence ID" value="NM_001092574.1"/>
</dbReference>
<dbReference type="SMR" id="Q6DKE9"/>
<dbReference type="DNASU" id="444472"/>
<dbReference type="GeneID" id="444472"/>
<dbReference type="KEGG" id="xla:444472"/>
<dbReference type="AGR" id="Xenbase:XB-GENE-6255120"/>
<dbReference type="CTD" id="444472"/>
<dbReference type="OrthoDB" id="285674at2759"/>
<dbReference type="UniPathway" id="UPA00126">
    <property type="reaction ID" value="UER00930"/>
</dbReference>
<dbReference type="Proteomes" id="UP000186698">
    <property type="component" value="Chromosome 9_10S"/>
</dbReference>
<dbReference type="Bgee" id="444472">
    <property type="expression patterns" value="Expressed in testis and 19 other cell types or tissues"/>
</dbReference>
<dbReference type="GO" id="GO:0005737">
    <property type="term" value="C:cytoplasm"/>
    <property type="evidence" value="ECO:0000318"/>
    <property type="project" value="GO_Central"/>
</dbReference>
<dbReference type="GO" id="GO:0005525">
    <property type="term" value="F:GTP binding"/>
    <property type="evidence" value="ECO:0007669"/>
    <property type="project" value="UniProtKB-KW"/>
</dbReference>
<dbReference type="GO" id="GO:0004475">
    <property type="term" value="F:mannose-1-phosphate guanylyltransferase (GTP) activity"/>
    <property type="evidence" value="ECO:0007669"/>
    <property type="project" value="UniProtKB-EC"/>
</dbReference>
<dbReference type="GO" id="GO:0009298">
    <property type="term" value="P:GDP-mannose biosynthetic process"/>
    <property type="evidence" value="ECO:0007669"/>
    <property type="project" value="UniProtKB-UniPathway"/>
</dbReference>
<dbReference type="CDD" id="cd06428">
    <property type="entry name" value="M1P_guanylylT_A_like_N"/>
    <property type="match status" value="1"/>
</dbReference>
<dbReference type="FunFam" id="3.90.550.10:FF:000071">
    <property type="entry name" value="Mannose-1-phosphate guanyltransferase alpha"/>
    <property type="match status" value="1"/>
</dbReference>
<dbReference type="Gene3D" id="2.160.10.10">
    <property type="entry name" value="Hexapeptide repeat proteins"/>
    <property type="match status" value="1"/>
</dbReference>
<dbReference type="Gene3D" id="3.90.550.10">
    <property type="entry name" value="Spore Coat Polysaccharide Biosynthesis Protein SpsA, Chain A"/>
    <property type="match status" value="1"/>
</dbReference>
<dbReference type="InterPro" id="IPR056729">
    <property type="entry name" value="GMPPB_C"/>
</dbReference>
<dbReference type="InterPro" id="IPR018357">
    <property type="entry name" value="Hexapep_transf_CS"/>
</dbReference>
<dbReference type="InterPro" id="IPR050486">
    <property type="entry name" value="Mannose-1P_guanyltransferase"/>
</dbReference>
<dbReference type="InterPro" id="IPR005835">
    <property type="entry name" value="NTP_transferase_dom"/>
</dbReference>
<dbReference type="InterPro" id="IPR029044">
    <property type="entry name" value="Nucleotide-diphossugar_trans"/>
</dbReference>
<dbReference type="PANTHER" id="PTHR22572">
    <property type="entry name" value="SUGAR-1-PHOSPHATE GUANYL TRANSFERASE"/>
    <property type="match status" value="1"/>
</dbReference>
<dbReference type="Pfam" id="PF25087">
    <property type="entry name" value="GMPPB_C"/>
    <property type="match status" value="1"/>
</dbReference>
<dbReference type="Pfam" id="PF00483">
    <property type="entry name" value="NTP_transferase"/>
    <property type="match status" value="1"/>
</dbReference>
<dbReference type="SUPFAM" id="SSF53448">
    <property type="entry name" value="Nucleotide-diphospho-sugar transferases"/>
    <property type="match status" value="1"/>
</dbReference>
<dbReference type="PROSITE" id="PS00101">
    <property type="entry name" value="HEXAPEP_TRANSFERASES"/>
    <property type="match status" value="1"/>
</dbReference>